<proteinExistence type="inferred from homology"/>
<evidence type="ECO:0000255" key="1">
    <source>
        <dbReference type="HAMAP-Rule" id="MF_01363"/>
    </source>
</evidence>
<evidence type="ECO:0000305" key="2"/>
<dbReference type="EMBL" id="AE004439">
    <property type="protein sequence ID" value="AAK02431.1"/>
    <property type="molecule type" value="Genomic_DNA"/>
</dbReference>
<dbReference type="RefSeq" id="WP_005721505.1">
    <property type="nucleotide sequence ID" value="NC_002663.1"/>
</dbReference>
<dbReference type="SMR" id="Q9CNS8"/>
<dbReference type="STRING" id="272843.PM0347"/>
<dbReference type="EnsemblBacteria" id="AAK02431">
    <property type="protein sequence ID" value="AAK02431"/>
    <property type="gene ID" value="PM0347"/>
</dbReference>
<dbReference type="GeneID" id="77206166"/>
<dbReference type="KEGG" id="pmu:PM0347"/>
<dbReference type="HOGENOM" id="CLU_061463_3_2_6"/>
<dbReference type="OrthoDB" id="9813334at2"/>
<dbReference type="Proteomes" id="UP000000809">
    <property type="component" value="Chromosome"/>
</dbReference>
<dbReference type="GO" id="GO:0005737">
    <property type="term" value="C:cytoplasm"/>
    <property type="evidence" value="ECO:0007669"/>
    <property type="project" value="UniProtKB-ARBA"/>
</dbReference>
<dbReference type="GO" id="GO:1990904">
    <property type="term" value="C:ribonucleoprotein complex"/>
    <property type="evidence" value="ECO:0007669"/>
    <property type="project" value="UniProtKB-KW"/>
</dbReference>
<dbReference type="GO" id="GO:0005840">
    <property type="term" value="C:ribosome"/>
    <property type="evidence" value="ECO:0007669"/>
    <property type="project" value="UniProtKB-KW"/>
</dbReference>
<dbReference type="GO" id="GO:0019843">
    <property type="term" value="F:rRNA binding"/>
    <property type="evidence" value="ECO:0007669"/>
    <property type="project" value="UniProtKB-UniRule"/>
</dbReference>
<dbReference type="GO" id="GO:0003735">
    <property type="term" value="F:structural constituent of ribosome"/>
    <property type="evidence" value="ECO:0007669"/>
    <property type="project" value="InterPro"/>
</dbReference>
<dbReference type="GO" id="GO:0006412">
    <property type="term" value="P:translation"/>
    <property type="evidence" value="ECO:0007669"/>
    <property type="project" value="UniProtKB-UniRule"/>
</dbReference>
<dbReference type="HAMAP" id="MF_01363">
    <property type="entry name" value="Ribosomal_bL21"/>
    <property type="match status" value="1"/>
</dbReference>
<dbReference type="InterPro" id="IPR028909">
    <property type="entry name" value="bL21-like"/>
</dbReference>
<dbReference type="InterPro" id="IPR036164">
    <property type="entry name" value="bL21-like_sf"/>
</dbReference>
<dbReference type="InterPro" id="IPR001787">
    <property type="entry name" value="Ribosomal_bL21"/>
</dbReference>
<dbReference type="InterPro" id="IPR018258">
    <property type="entry name" value="Ribosomal_bL21_CS"/>
</dbReference>
<dbReference type="NCBIfam" id="TIGR00061">
    <property type="entry name" value="L21"/>
    <property type="match status" value="1"/>
</dbReference>
<dbReference type="PANTHER" id="PTHR21349">
    <property type="entry name" value="50S RIBOSOMAL PROTEIN L21"/>
    <property type="match status" value="1"/>
</dbReference>
<dbReference type="PANTHER" id="PTHR21349:SF0">
    <property type="entry name" value="LARGE RIBOSOMAL SUBUNIT PROTEIN BL21M"/>
    <property type="match status" value="1"/>
</dbReference>
<dbReference type="Pfam" id="PF00829">
    <property type="entry name" value="Ribosomal_L21p"/>
    <property type="match status" value="1"/>
</dbReference>
<dbReference type="SUPFAM" id="SSF141091">
    <property type="entry name" value="L21p-like"/>
    <property type="match status" value="1"/>
</dbReference>
<dbReference type="PROSITE" id="PS01169">
    <property type="entry name" value="RIBOSOMAL_L21"/>
    <property type="match status" value="1"/>
</dbReference>
<accession>Q9CNS8</accession>
<feature type="chain" id="PRO_0000269354" description="Large ribosomal subunit protein bL21">
    <location>
        <begin position="1"/>
        <end position="103"/>
    </location>
</feature>
<sequence>MYAVFQSGGKQHRVSEGQVVRLEKLEVATGETVEFDSVLMIVNGEDVKIGAPVVAGGKVVAEVVAHGRGDKVKIVKFRRRKHSRKQQGHRQWFTEVKITGIQA</sequence>
<keyword id="KW-1185">Reference proteome</keyword>
<keyword id="KW-0687">Ribonucleoprotein</keyword>
<keyword id="KW-0689">Ribosomal protein</keyword>
<keyword id="KW-0694">RNA-binding</keyword>
<keyword id="KW-0699">rRNA-binding</keyword>
<organism>
    <name type="scientific">Pasteurella multocida (strain Pm70)</name>
    <dbReference type="NCBI Taxonomy" id="272843"/>
    <lineage>
        <taxon>Bacteria</taxon>
        <taxon>Pseudomonadati</taxon>
        <taxon>Pseudomonadota</taxon>
        <taxon>Gammaproteobacteria</taxon>
        <taxon>Pasteurellales</taxon>
        <taxon>Pasteurellaceae</taxon>
        <taxon>Pasteurella</taxon>
    </lineage>
</organism>
<gene>
    <name evidence="1" type="primary">rplU</name>
    <name type="ordered locus">PM0347</name>
</gene>
<protein>
    <recommendedName>
        <fullName evidence="1">Large ribosomal subunit protein bL21</fullName>
    </recommendedName>
    <alternativeName>
        <fullName evidence="2">50S ribosomal protein L21</fullName>
    </alternativeName>
</protein>
<reference key="1">
    <citation type="journal article" date="2001" name="Proc. Natl. Acad. Sci. U.S.A.">
        <title>Complete genomic sequence of Pasteurella multocida Pm70.</title>
        <authorList>
            <person name="May B.J."/>
            <person name="Zhang Q."/>
            <person name="Li L.L."/>
            <person name="Paustian M.L."/>
            <person name="Whittam T.S."/>
            <person name="Kapur V."/>
        </authorList>
    </citation>
    <scope>NUCLEOTIDE SEQUENCE [LARGE SCALE GENOMIC DNA]</scope>
    <source>
        <strain>Pm70</strain>
    </source>
</reference>
<comment type="function">
    <text evidence="1">This protein binds to 23S rRNA in the presence of protein L20.</text>
</comment>
<comment type="subunit">
    <text evidence="1">Part of the 50S ribosomal subunit. Contacts protein L20.</text>
</comment>
<comment type="similarity">
    <text evidence="1">Belongs to the bacterial ribosomal protein bL21 family.</text>
</comment>
<name>RL21_PASMU</name>